<sequence length="144" mass="16368">MLMPKRVKHRKVQRGRMKGKATRGNFLAYGDFGIQATTCGWITSNQIEAARIAINRYIRRGGKLWIKIFPDKPVTEKPAETRMGSGKGSVEYWVAVVKPGRVLFELSGVDEEKAREAMRLASHKLPVKTKFVTRRDFEEMGGEE</sequence>
<evidence type="ECO:0000255" key="1">
    <source>
        <dbReference type="HAMAP-Rule" id="MF_01342"/>
    </source>
</evidence>
<evidence type="ECO:0000305" key="2"/>
<dbReference type="EMBL" id="BA000016">
    <property type="protein sequence ID" value="BAB82104.1"/>
    <property type="molecule type" value="Genomic_DNA"/>
</dbReference>
<dbReference type="RefSeq" id="WP_003454381.1">
    <property type="nucleotide sequence ID" value="NC_003366.1"/>
</dbReference>
<dbReference type="SMR" id="Q8XHT0"/>
<dbReference type="STRING" id="195102.gene:10491715"/>
<dbReference type="GeneID" id="93001016"/>
<dbReference type="KEGG" id="cpe:CPE2398"/>
<dbReference type="HOGENOM" id="CLU_078858_2_1_9"/>
<dbReference type="Proteomes" id="UP000000818">
    <property type="component" value="Chromosome"/>
</dbReference>
<dbReference type="GO" id="GO:0022625">
    <property type="term" value="C:cytosolic large ribosomal subunit"/>
    <property type="evidence" value="ECO:0007669"/>
    <property type="project" value="TreeGrafter"/>
</dbReference>
<dbReference type="GO" id="GO:0019843">
    <property type="term" value="F:rRNA binding"/>
    <property type="evidence" value="ECO:0007669"/>
    <property type="project" value="UniProtKB-UniRule"/>
</dbReference>
<dbReference type="GO" id="GO:0003735">
    <property type="term" value="F:structural constituent of ribosome"/>
    <property type="evidence" value="ECO:0007669"/>
    <property type="project" value="InterPro"/>
</dbReference>
<dbReference type="GO" id="GO:0000049">
    <property type="term" value="F:tRNA binding"/>
    <property type="evidence" value="ECO:0007669"/>
    <property type="project" value="UniProtKB-KW"/>
</dbReference>
<dbReference type="GO" id="GO:0006412">
    <property type="term" value="P:translation"/>
    <property type="evidence" value="ECO:0007669"/>
    <property type="project" value="UniProtKB-UniRule"/>
</dbReference>
<dbReference type="CDD" id="cd01433">
    <property type="entry name" value="Ribosomal_L16_L10e"/>
    <property type="match status" value="1"/>
</dbReference>
<dbReference type="FunFam" id="3.90.1170.10:FF:000001">
    <property type="entry name" value="50S ribosomal protein L16"/>
    <property type="match status" value="1"/>
</dbReference>
<dbReference type="Gene3D" id="3.90.1170.10">
    <property type="entry name" value="Ribosomal protein L10e/L16"/>
    <property type="match status" value="1"/>
</dbReference>
<dbReference type="HAMAP" id="MF_01342">
    <property type="entry name" value="Ribosomal_uL16"/>
    <property type="match status" value="1"/>
</dbReference>
<dbReference type="InterPro" id="IPR047873">
    <property type="entry name" value="Ribosomal_uL16"/>
</dbReference>
<dbReference type="InterPro" id="IPR000114">
    <property type="entry name" value="Ribosomal_uL16_bact-type"/>
</dbReference>
<dbReference type="InterPro" id="IPR020798">
    <property type="entry name" value="Ribosomal_uL16_CS"/>
</dbReference>
<dbReference type="InterPro" id="IPR016180">
    <property type="entry name" value="Ribosomal_uL16_dom"/>
</dbReference>
<dbReference type="InterPro" id="IPR036920">
    <property type="entry name" value="Ribosomal_uL16_sf"/>
</dbReference>
<dbReference type="NCBIfam" id="TIGR01164">
    <property type="entry name" value="rplP_bact"/>
    <property type="match status" value="1"/>
</dbReference>
<dbReference type="PANTHER" id="PTHR12220">
    <property type="entry name" value="50S/60S RIBOSOMAL PROTEIN L16"/>
    <property type="match status" value="1"/>
</dbReference>
<dbReference type="PANTHER" id="PTHR12220:SF13">
    <property type="entry name" value="LARGE RIBOSOMAL SUBUNIT PROTEIN UL16M"/>
    <property type="match status" value="1"/>
</dbReference>
<dbReference type="Pfam" id="PF00252">
    <property type="entry name" value="Ribosomal_L16"/>
    <property type="match status" value="1"/>
</dbReference>
<dbReference type="PRINTS" id="PR00060">
    <property type="entry name" value="RIBOSOMALL16"/>
</dbReference>
<dbReference type="SUPFAM" id="SSF54686">
    <property type="entry name" value="Ribosomal protein L16p/L10e"/>
    <property type="match status" value="1"/>
</dbReference>
<dbReference type="PROSITE" id="PS00586">
    <property type="entry name" value="RIBOSOMAL_L16_1"/>
    <property type="match status" value="1"/>
</dbReference>
<dbReference type="PROSITE" id="PS00701">
    <property type="entry name" value="RIBOSOMAL_L16_2"/>
    <property type="match status" value="1"/>
</dbReference>
<keyword id="KW-1185">Reference proteome</keyword>
<keyword id="KW-0687">Ribonucleoprotein</keyword>
<keyword id="KW-0689">Ribosomal protein</keyword>
<keyword id="KW-0694">RNA-binding</keyword>
<keyword id="KW-0699">rRNA-binding</keyword>
<keyword id="KW-0820">tRNA-binding</keyword>
<accession>Q8XHT0</accession>
<proteinExistence type="inferred from homology"/>
<reference key="1">
    <citation type="journal article" date="2002" name="Proc. Natl. Acad. Sci. U.S.A.">
        <title>Complete genome sequence of Clostridium perfringens, an anaerobic flesh-eater.</title>
        <authorList>
            <person name="Shimizu T."/>
            <person name="Ohtani K."/>
            <person name="Hirakawa H."/>
            <person name="Ohshima K."/>
            <person name="Yamashita A."/>
            <person name="Shiba T."/>
            <person name="Ogasawara N."/>
            <person name="Hattori M."/>
            <person name="Kuhara S."/>
            <person name="Hayashi H."/>
        </authorList>
    </citation>
    <scope>NUCLEOTIDE SEQUENCE [LARGE SCALE GENOMIC DNA]</scope>
    <source>
        <strain>13 / Type A</strain>
    </source>
</reference>
<gene>
    <name evidence="1" type="primary">rplP</name>
    <name type="ordered locus">CPE2398</name>
</gene>
<feature type="chain" id="PRO_0000062082" description="Large ribosomal subunit protein uL16">
    <location>
        <begin position="1"/>
        <end position="144"/>
    </location>
</feature>
<organism>
    <name type="scientific">Clostridium perfringens (strain 13 / Type A)</name>
    <dbReference type="NCBI Taxonomy" id="195102"/>
    <lineage>
        <taxon>Bacteria</taxon>
        <taxon>Bacillati</taxon>
        <taxon>Bacillota</taxon>
        <taxon>Clostridia</taxon>
        <taxon>Eubacteriales</taxon>
        <taxon>Clostridiaceae</taxon>
        <taxon>Clostridium</taxon>
    </lineage>
</organism>
<comment type="function">
    <text evidence="1">Binds 23S rRNA and is also seen to make contacts with the A and possibly P site tRNAs.</text>
</comment>
<comment type="subunit">
    <text evidence="1">Part of the 50S ribosomal subunit.</text>
</comment>
<comment type="similarity">
    <text evidence="1">Belongs to the universal ribosomal protein uL16 family.</text>
</comment>
<name>RL16_CLOPE</name>
<protein>
    <recommendedName>
        <fullName evidence="1">Large ribosomal subunit protein uL16</fullName>
    </recommendedName>
    <alternativeName>
        <fullName evidence="2">50S ribosomal protein L16</fullName>
    </alternativeName>
</protein>